<feature type="chain" id="PRO_0000433341" description="NADH dehydrogenase [ubiquinone] 1 alpha subcomplex subunit N7BM">
    <location>
        <begin position="1"/>
        <end position="138"/>
    </location>
</feature>
<feature type="helix" evidence="8">
    <location>
        <begin position="5"/>
        <end position="15"/>
    </location>
</feature>
<feature type="helix" evidence="8">
    <location>
        <begin position="17"/>
        <end position="26"/>
    </location>
</feature>
<feature type="strand" evidence="8">
    <location>
        <begin position="34"/>
        <end position="38"/>
    </location>
</feature>
<feature type="strand" evidence="8">
    <location>
        <begin position="40"/>
        <end position="42"/>
    </location>
</feature>
<feature type="strand" evidence="8">
    <location>
        <begin position="44"/>
        <end position="47"/>
    </location>
</feature>
<feature type="strand" evidence="8">
    <location>
        <begin position="58"/>
        <end position="62"/>
    </location>
</feature>
<feature type="strand" evidence="8">
    <location>
        <begin position="64"/>
        <end position="67"/>
    </location>
</feature>
<feature type="helix" evidence="8">
    <location>
        <begin position="70"/>
        <end position="72"/>
    </location>
</feature>
<feature type="helix" evidence="8">
    <location>
        <begin position="77"/>
        <end position="81"/>
    </location>
</feature>
<feature type="helix" evidence="8">
    <location>
        <begin position="89"/>
        <end position="91"/>
    </location>
</feature>
<feature type="helix" evidence="8">
    <location>
        <begin position="94"/>
        <end position="96"/>
    </location>
</feature>
<feature type="strand" evidence="7">
    <location>
        <begin position="111"/>
        <end position="113"/>
    </location>
</feature>
<dbReference type="EMBL" id="CR382128">
    <property type="protein sequence ID" value="CAG82573.1"/>
    <property type="molecule type" value="Genomic_DNA"/>
</dbReference>
<dbReference type="RefSeq" id="XP_500359.1">
    <property type="nucleotide sequence ID" value="XM_500359.1"/>
</dbReference>
<dbReference type="PDB" id="6GCS">
    <property type="method" value="EM"/>
    <property type="resolution" value="4.32 A"/>
    <property type="chains" value="h=1-138"/>
</dbReference>
<dbReference type="PDB" id="6RFR">
    <property type="method" value="EM"/>
    <property type="resolution" value="3.20 A"/>
    <property type="chains" value="h=1-138"/>
</dbReference>
<dbReference type="PDB" id="6RFS">
    <property type="method" value="EM"/>
    <property type="resolution" value="4.04 A"/>
    <property type="chains" value="h=1-138"/>
</dbReference>
<dbReference type="PDB" id="6Y79">
    <property type="method" value="EM"/>
    <property type="resolution" value="3.20 A"/>
    <property type="chains" value="h=1-138"/>
</dbReference>
<dbReference type="PDB" id="6YJ4">
    <property type="method" value="EM"/>
    <property type="resolution" value="2.70 A"/>
    <property type="chains" value="f=1-138"/>
</dbReference>
<dbReference type="PDB" id="7O6Y">
    <property type="method" value="EM"/>
    <property type="resolution" value="3.40 A"/>
    <property type="chains" value="h=1-138"/>
</dbReference>
<dbReference type="PDB" id="7O71">
    <property type="method" value="EM"/>
    <property type="resolution" value="2.40 A"/>
    <property type="chains" value="h=1-138"/>
</dbReference>
<dbReference type="PDBsum" id="6GCS"/>
<dbReference type="PDBsum" id="6RFR"/>
<dbReference type="PDBsum" id="6RFS"/>
<dbReference type="PDBsum" id="6Y79"/>
<dbReference type="PDBsum" id="6YJ4"/>
<dbReference type="PDBsum" id="7O6Y"/>
<dbReference type="PDBsum" id="7O71"/>
<dbReference type="EMDB" id="EMD-4384"/>
<dbReference type="SMR" id="Q6CG53"/>
<dbReference type="IntAct" id="Q6CG53">
    <property type="interactions" value="1"/>
</dbReference>
<dbReference type="STRING" id="284591.Q6CG53"/>
<dbReference type="EnsemblFungi" id="CAG82573">
    <property type="protein sequence ID" value="CAG82573"/>
    <property type="gene ID" value="YALI0_B00792g"/>
</dbReference>
<dbReference type="KEGG" id="yli:2907560"/>
<dbReference type="VEuPathDB" id="FungiDB:YALI0_B00792g"/>
<dbReference type="HOGENOM" id="CLU_110455_2_1_1"/>
<dbReference type="InParanoid" id="Q6CG53"/>
<dbReference type="OMA" id="WHGWIHH"/>
<dbReference type="OrthoDB" id="104621at4891"/>
<dbReference type="Proteomes" id="UP000001300">
    <property type="component" value="Chromosome B"/>
</dbReference>
<dbReference type="GO" id="GO:0005743">
    <property type="term" value="C:mitochondrial inner membrane"/>
    <property type="evidence" value="ECO:0007669"/>
    <property type="project" value="UniProtKB-SubCell"/>
</dbReference>
<dbReference type="GO" id="GO:0045271">
    <property type="term" value="C:respiratory chain complex I"/>
    <property type="evidence" value="ECO:0000318"/>
    <property type="project" value="GO_Central"/>
</dbReference>
<dbReference type="InterPro" id="IPR007763">
    <property type="entry name" value="NDUFA12"/>
</dbReference>
<dbReference type="PANTHER" id="PTHR12910:SF2">
    <property type="entry name" value="NADH DEHYDROGENASE [UBIQUINONE] 1 ALPHA SUBCOMPLEX SUBUNIT 12"/>
    <property type="match status" value="1"/>
</dbReference>
<dbReference type="PANTHER" id="PTHR12910">
    <property type="entry name" value="NADH-UBIQUINONE OXIDOREDUCTASE SUBUNIT B17.2"/>
    <property type="match status" value="1"/>
</dbReference>
<dbReference type="Pfam" id="PF05071">
    <property type="entry name" value="NDUFA12"/>
    <property type="match status" value="1"/>
</dbReference>
<sequence>MSSSLYRVLRNAWEVGPRSYWKQLNSIGDTKSGRLVGTDIYGNKFYETDHQDEIHLRTRYVEYKEKDYDMSQVEPGWHFWLGYGVDTAPCNTPKEKLPIRAYPYKFQPNYTGTPGAFVTYNTLKPKISAWEPVTKQRS</sequence>
<proteinExistence type="evidence at protein level"/>
<evidence type="ECO:0000250" key="1">
    <source>
        <dbReference type="UniProtKB" id="O97725"/>
    </source>
</evidence>
<evidence type="ECO:0000269" key="2">
    <source>
    </source>
</evidence>
<evidence type="ECO:0000269" key="3">
    <source>
    </source>
</evidence>
<evidence type="ECO:0000303" key="4">
    <source>
    </source>
</evidence>
<evidence type="ECO:0000305" key="5"/>
<evidence type="ECO:0000305" key="6">
    <source>
    </source>
</evidence>
<evidence type="ECO:0007829" key="7">
    <source>
        <dbReference type="PDB" id="6Y79"/>
    </source>
</evidence>
<evidence type="ECO:0007829" key="8">
    <source>
        <dbReference type="PDB" id="7O71"/>
    </source>
</evidence>
<comment type="function">
    <text evidence="1">Accessory subunit of the mitochondrial membrane respiratory chain NADH dehydrogenase (Complex I), that is believed not to be involved in catalysis. Complex I functions in the transfer of electrons from NADH to the respiratory chain. The immediate electron acceptor for the enzyme is believed to be ubiquinone.</text>
</comment>
<comment type="subunit">
    <text evidence="2 3">Complex I is composed of 42 different subunits.</text>
</comment>
<comment type="subcellular location">
    <subcellularLocation>
        <location evidence="1">Mitochondrion inner membrane</location>
        <topology evidence="1">Peripheral membrane protein</topology>
        <orientation evidence="1">Matrix side</orientation>
    </subcellularLocation>
</comment>
<comment type="similarity">
    <text evidence="5">Belongs to the complex I NDUFA12 subunit family.</text>
</comment>
<name>N7BM_YARLI</name>
<organism>
    <name type="scientific">Yarrowia lipolytica (strain CLIB 122 / E 150)</name>
    <name type="common">Yeast</name>
    <name type="synonym">Candida lipolytica</name>
    <dbReference type="NCBI Taxonomy" id="284591"/>
    <lineage>
        <taxon>Eukaryota</taxon>
        <taxon>Fungi</taxon>
        <taxon>Dikarya</taxon>
        <taxon>Ascomycota</taxon>
        <taxon>Saccharomycotina</taxon>
        <taxon>Dipodascomycetes</taxon>
        <taxon>Dipodascales</taxon>
        <taxon>Dipodascales incertae sedis</taxon>
        <taxon>Yarrowia</taxon>
    </lineage>
</organism>
<keyword id="KW-0002">3D-structure</keyword>
<keyword id="KW-0249">Electron transport</keyword>
<keyword id="KW-0472">Membrane</keyword>
<keyword id="KW-0496">Mitochondrion</keyword>
<keyword id="KW-0999">Mitochondrion inner membrane</keyword>
<keyword id="KW-1185">Reference proteome</keyword>
<keyword id="KW-0679">Respiratory chain</keyword>
<keyword id="KW-0813">Transport</keyword>
<accession>Q6CG53</accession>
<protein>
    <recommendedName>
        <fullName evidence="6">NADH dehydrogenase [ubiquinone] 1 alpha subcomplex subunit N7BM</fullName>
    </recommendedName>
    <alternativeName>
        <fullName>NADH-ubiquinone oxidoreductase subunit N7BM</fullName>
    </alternativeName>
</protein>
<gene>
    <name evidence="4" type="primary">N7BM</name>
    <name type="ordered locus">YALI0B00792g</name>
</gene>
<reference key="1">
    <citation type="journal article" date="2004" name="Nature">
        <title>Genome evolution in yeasts.</title>
        <authorList>
            <person name="Dujon B."/>
            <person name="Sherman D."/>
            <person name="Fischer G."/>
            <person name="Durrens P."/>
            <person name="Casaregola S."/>
            <person name="Lafontaine I."/>
            <person name="de Montigny J."/>
            <person name="Marck C."/>
            <person name="Neuveglise C."/>
            <person name="Talla E."/>
            <person name="Goffard N."/>
            <person name="Frangeul L."/>
            <person name="Aigle M."/>
            <person name="Anthouard V."/>
            <person name="Babour A."/>
            <person name="Barbe V."/>
            <person name="Barnay S."/>
            <person name="Blanchin S."/>
            <person name="Beckerich J.-M."/>
            <person name="Beyne E."/>
            <person name="Bleykasten C."/>
            <person name="Boisrame A."/>
            <person name="Boyer J."/>
            <person name="Cattolico L."/>
            <person name="Confanioleri F."/>
            <person name="de Daruvar A."/>
            <person name="Despons L."/>
            <person name="Fabre E."/>
            <person name="Fairhead C."/>
            <person name="Ferry-Dumazet H."/>
            <person name="Groppi A."/>
            <person name="Hantraye F."/>
            <person name="Hennequin C."/>
            <person name="Jauniaux N."/>
            <person name="Joyet P."/>
            <person name="Kachouri R."/>
            <person name="Kerrest A."/>
            <person name="Koszul R."/>
            <person name="Lemaire M."/>
            <person name="Lesur I."/>
            <person name="Ma L."/>
            <person name="Muller H."/>
            <person name="Nicaud J.-M."/>
            <person name="Nikolski M."/>
            <person name="Oztas S."/>
            <person name="Ozier-Kalogeropoulos O."/>
            <person name="Pellenz S."/>
            <person name="Potier S."/>
            <person name="Richard G.-F."/>
            <person name="Straub M.-L."/>
            <person name="Suleau A."/>
            <person name="Swennen D."/>
            <person name="Tekaia F."/>
            <person name="Wesolowski-Louvel M."/>
            <person name="Westhof E."/>
            <person name="Wirth B."/>
            <person name="Zeniou-Meyer M."/>
            <person name="Zivanovic Y."/>
            <person name="Bolotin-Fukuhara M."/>
            <person name="Thierry A."/>
            <person name="Bouchier C."/>
            <person name="Caudron B."/>
            <person name="Scarpelli C."/>
            <person name="Gaillardin C."/>
            <person name="Weissenbach J."/>
            <person name="Wincker P."/>
            <person name="Souciet J.-L."/>
        </authorList>
    </citation>
    <scope>NUCLEOTIDE SEQUENCE [LARGE SCALE GENOMIC DNA]</scope>
    <source>
        <strain>CLIB 122 / E 150</strain>
    </source>
</reference>
<reference key="2">
    <citation type="journal article" date="2004" name="Biochim. Biophys. Acta">
        <title>Subunit composition of mitochondrial complex I from the yeast Yarrowia lipolytica.</title>
        <authorList>
            <person name="Abdrakhmanova A."/>
            <person name="Zickermann V."/>
            <person name="Bostina M."/>
            <person name="Radermacher M."/>
            <person name="Schagger H."/>
            <person name="Kerscher S."/>
            <person name="Brandt U."/>
        </authorList>
    </citation>
    <scope>SUBUNIT</scope>
    <scope>IDENTIFICATION BY MASS SPECTROMETRY</scope>
</reference>
<reference key="3">
    <citation type="journal article" date="2008" name="Biochim. Biophys. Acta">
        <title>Subunit mass fingerprinting of mitochondrial complex I.</title>
        <authorList>
            <person name="Morgner N."/>
            <person name="Zickermann V."/>
            <person name="Kerscher S."/>
            <person name="Wittig I."/>
            <person name="Abdrakhmanova A."/>
            <person name="Barth H.D."/>
            <person name="Brutschy B."/>
            <person name="Brandt U."/>
        </authorList>
    </citation>
    <scope>SUBUNIT</scope>
    <scope>IDENTIFICATION BY MASS SPECTROMETRY</scope>
</reference>